<name>ANXA4_CANLF</name>
<evidence type="ECO:0000250" key="1"/>
<evidence type="ECO:0000250" key="2">
    <source>
        <dbReference type="UniProtKB" id="P08132"/>
    </source>
</evidence>
<evidence type="ECO:0000250" key="3">
    <source>
        <dbReference type="UniProtKB" id="P09525"/>
    </source>
</evidence>
<evidence type="ECO:0000255" key="4">
    <source>
        <dbReference type="PROSITE-ProRule" id="PRU01245"/>
    </source>
</evidence>
<evidence type="ECO:0000269" key="5">
    <source>
    </source>
</evidence>
<evidence type="ECO:0000269" key="6">
    <source>
    </source>
</evidence>
<evidence type="ECO:0000305" key="7"/>
<evidence type="ECO:0000305" key="8">
    <source>
    </source>
</evidence>
<dbReference type="EMBL" id="D38223">
    <property type="protein sequence ID" value="BAA07398.1"/>
    <property type="molecule type" value="mRNA"/>
</dbReference>
<dbReference type="PIR" id="PC2197">
    <property type="entry name" value="PC2197"/>
</dbReference>
<dbReference type="SMR" id="P50994"/>
<dbReference type="FunCoup" id="P50994">
    <property type="interactions" value="438"/>
</dbReference>
<dbReference type="STRING" id="9615.ENSCAFP00000060866"/>
<dbReference type="PaxDb" id="9612-ENSCAFP00000004907"/>
<dbReference type="eggNOG" id="KOG0819">
    <property type="taxonomic scope" value="Eukaryota"/>
</dbReference>
<dbReference type="InParanoid" id="P50994"/>
<dbReference type="OrthoDB" id="37886at2759"/>
<dbReference type="Proteomes" id="UP000002254">
    <property type="component" value="Unplaced"/>
</dbReference>
<dbReference type="Proteomes" id="UP000694429">
    <property type="component" value="Unplaced"/>
</dbReference>
<dbReference type="Proteomes" id="UP000694542">
    <property type="component" value="Unplaced"/>
</dbReference>
<dbReference type="Proteomes" id="UP000805418">
    <property type="component" value="Unplaced"/>
</dbReference>
<dbReference type="GO" id="GO:0005737">
    <property type="term" value="C:cytoplasm"/>
    <property type="evidence" value="ECO:0000318"/>
    <property type="project" value="GO_Central"/>
</dbReference>
<dbReference type="GO" id="GO:0005634">
    <property type="term" value="C:nucleus"/>
    <property type="evidence" value="ECO:0000318"/>
    <property type="project" value="GO_Central"/>
</dbReference>
<dbReference type="GO" id="GO:0005886">
    <property type="term" value="C:plasma membrane"/>
    <property type="evidence" value="ECO:0000318"/>
    <property type="project" value="GO_Central"/>
</dbReference>
<dbReference type="GO" id="GO:0012506">
    <property type="term" value="C:vesicle membrane"/>
    <property type="evidence" value="ECO:0000318"/>
    <property type="project" value="GO_Central"/>
</dbReference>
<dbReference type="GO" id="GO:0042589">
    <property type="term" value="C:zymogen granule membrane"/>
    <property type="evidence" value="ECO:0007669"/>
    <property type="project" value="UniProtKB-SubCell"/>
</dbReference>
<dbReference type="GO" id="GO:0005509">
    <property type="term" value="F:calcium ion binding"/>
    <property type="evidence" value="ECO:0007669"/>
    <property type="project" value="InterPro"/>
</dbReference>
<dbReference type="GO" id="GO:0005544">
    <property type="term" value="F:calcium-dependent phospholipid binding"/>
    <property type="evidence" value="ECO:0000318"/>
    <property type="project" value="GO_Central"/>
</dbReference>
<dbReference type="GO" id="GO:0001786">
    <property type="term" value="F:phosphatidylserine binding"/>
    <property type="evidence" value="ECO:0000318"/>
    <property type="project" value="GO_Central"/>
</dbReference>
<dbReference type="FunFam" id="1.10.220.10:FF:000002">
    <property type="entry name" value="Annexin"/>
    <property type="match status" value="1"/>
</dbReference>
<dbReference type="FunFam" id="1.10.220.10:FF:000003">
    <property type="entry name" value="Annexin"/>
    <property type="match status" value="1"/>
</dbReference>
<dbReference type="FunFam" id="1.10.220.10:FF:000004">
    <property type="entry name" value="Annexin"/>
    <property type="match status" value="1"/>
</dbReference>
<dbReference type="FunFam" id="1.10.220.10:FF:000022">
    <property type="entry name" value="Annexin A5"/>
    <property type="match status" value="1"/>
</dbReference>
<dbReference type="Gene3D" id="1.10.220.10">
    <property type="entry name" value="Annexin"/>
    <property type="match status" value="4"/>
</dbReference>
<dbReference type="InterPro" id="IPR001464">
    <property type="entry name" value="Annexin"/>
</dbReference>
<dbReference type="InterPro" id="IPR018502">
    <property type="entry name" value="Annexin_repeat"/>
</dbReference>
<dbReference type="InterPro" id="IPR018252">
    <property type="entry name" value="Annexin_repeat_CS"/>
</dbReference>
<dbReference type="InterPro" id="IPR037104">
    <property type="entry name" value="Annexin_sf"/>
</dbReference>
<dbReference type="InterPro" id="IPR002391">
    <property type="entry name" value="ANX4"/>
</dbReference>
<dbReference type="PANTHER" id="PTHR10502">
    <property type="entry name" value="ANNEXIN"/>
    <property type="match status" value="1"/>
</dbReference>
<dbReference type="PANTHER" id="PTHR10502:SF28">
    <property type="entry name" value="ANNEXIN A4"/>
    <property type="match status" value="1"/>
</dbReference>
<dbReference type="Pfam" id="PF00191">
    <property type="entry name" value="Annexin"/>
    <property type="match status" value="4"/>
</dbReference>
<dbReference type="PRINTS" id="PR00196">
    <property type="entry name" value="ANNEXIN"/>
</dbReference>
<dbReference type="PRINTS" id="PR00200">
    <property type="entry name" value="ANNEXINIV"/>
</dbReference>
<dbReference type="SMART" id="SM00335">
    <property type="entry name" value="ANX"/>
    <property type="match status" value="4"/>
</dbReference>
<dbReference type="SUPFAM" id="SSF47874">
    <property type="entry name" value="Annexin"/>
    <property type="match status" value="1"/>
</dbReference>
<dbReference type="PROSITE" id="PS00223">
    <property type="entry name" value="ANNEXIN_1"/>
    <property type="match status" value="4"/>
</dbReference>
<dbReference type="PROSITE" id="PS51897">
    <property type="entry name" value="ANNEXIN_2"/>
    <property type="match status" value="4"/>
</dbReference>
<proteinExistence type="evidence at protein level"/>
<keyword id="KW-0007">Acetylation</keyword>
<keyword id="KW-0041">Annexin</keyword>
<keyword id="KW-0106">Calcium</keyword>
<keyword id="KW-0111">Calcium/phospholipid-binding</keyword>
<keyword id="KW-0968">Cytoplasmic vesicle</keyword>
<keyword id="KW-0903">Direct protein sequencing</keyword>
<keyword id="KW-0472">Membrane</keyword>
<keyword id="KW-0597">Phosphoprotein</keyword>
<keyword id="KW-1185">Reference proteome</keyword>
<keyword id="KW-0677">Repeat</keyword>
<sequence length="319" mass="35813">MAAKGGTVKPASGFSATEDAQTLRKAMKGLGTDEDAIISVLAPRNTSQRQEIRTAYKSTIGRDLMDDLKSELSGNFERVIVGMITPTVLYDVQELRRAMKGSGTDEGCLIEILASRTPEELRCINQTYQLQYGRSLEDVIRSDTSFMFQRVLVSLSAGGRDEGNFLDDALMRQDAQDLYEAGEKKWGTDEVKFLTVLCSRNRNHLLHVFDEYKRISQKDIEQGIKSETSGSFEDALLAIVKCMRNKSAYFAERLYKSMKGLGTDDNTLIRVMVSRAEIDMMDIRESFKRLYGKSLYSFIKGDTSGDYRKVLLILCGGDD</sequence>
<feature type="initiator methionine" description="Removed" evidence="3 6">
    <location>
        <position position="1"/>
    </location>
</feature>
<feature type="chain" id="PRO_0000067481" description="Annexin A4">
    <location>
        <begin position="2"/>
        <end position="319"/>
    </location>
</feature>
<feature type="repeat" description="Annexin 1" evidence="4">
    <location>
        <begin position="14"/>
        <end position="85"/>
    </location>
</feature>
<feature type="repeat" description="Annexin 2" evidence="4">
    <location>
        <begin position="86"/>
        <end position="157"/>
    </location>
</feature>
<feature type="repeat" description="Annexin 3" evidence="4">
    <location>
        <begin position="169"/>
        <end position="241"/>
    </location>
</feature>
<feature type="repeat" description="Annexin 4" evidence="4">
    <location>
        <begin position="245"/>
        <end position="316"/>
    </location>
</feature>
<feature type="modified residue" description="N-acetylalanine" evidence="3">
    <location>
        <position position="2"/>
    </location>
</feature>
<feature type="modified residue" description="Phosphothreonine" evidence="2">
    <location>
        <position position="7"/>
    </location>
</feature>
<feature type="modified residue" description="Phosphoserine" evidence="3">
    <location>
        <position position="12"/>
    </location>
</feature>
<feature type="modified residue" description="N6-acetyllysine" evidence="3">
    <location>
        <position position="213"/>
    </location>
</feature>
<feature type="modified residue" description="N6-acetyllysine" evidence="3">
    <location>
        <position position="293"/>
    </location>
</feature>
<feature type="modified residue" description="N6-acetyllysine" evidence="3">
    <location>
        <position position="300"/>
    </location>
</feature>
<feature type="sequence conflict" description="In Ref. 1; AA sequence." evidence="7" ref="1">
    <original>V</original>
    <variation>D</variation>
    <location>
        <position position="139"/>
    </location>
</feature>
<protein>
    <recommendedName>
        <fullName>Annexin A4</fullName>
    </recommendedName>
    <alternativeName>
        <fullName>36 kDa zymogen granule membrane-associated protein</fullName>
        <shortName>ZAP36</shortName>
    </alternativeName>
    <alternativeName>
        <fullName>Annexin IV</fullName>
    </alternativeName>
    <alternativeName>
        <fullName>Annexin-4</fullName>
    </alternativeName>
    <alternativeName>
        <fullName>Lipocortin IV</fullName>
    </alternativeName>
</protein>
<organism>
    <name type="scientific">Canis lupus familiaris</name>
    <name type="common">Dog</name>
    <name type="synonym">Canis familiaris</name>
    <dbReference type="NCBI Taxonomy" id="9615"/>
    <lineage>
        <taxon>Eukaryota</taxon>
        <taxon>Metazoa</taxon>
        <taxon>Chordata</taxon>
        <taxon>Craniata</taxon>
        <taxon>Vertebrata</taxon>
        <taxon>Euteleostomi</taxon>
        <taxon>Mammalia</taxon>
        <taxon>Eutheria</taxon>
        <taxon>Laurasiatheria</taxon>
        <taxon>Carnivora</taxon>
        <taxon>Caniformia</taxon>
        <taxon>Canidae</taxon>
        <taxon>Canis</taxon>
    </lineage>
</organism>
<comment type="function">
    <text evidence="1">Calcium/phospholipid-binding protein which promotes membrane fusion and is involved in exocytosis.</text>
</comment>
<comment type="subcellular location">
    <subcellularLocation>
        <location evidence="5">Zymogen granule membrane</location>
        <topology evidence="8">Peripheral membrane protein</topology>
    </subcellularLocation>
</comment>
<comment type="tissue specificity">
    <text evidence="5">Expressed in pancreas (at protein level) (PubMed:12020832). Also detected in liver, spleen, intestine, stomach, kidney, and adrenal glands (PubMed:12020832).</text>
</comment>
<comment type="domain">
    <text>A pair of annexin repeats may form one binding site for calcium and phospholipid.</text>
</comment>
<comment type="miscellaneous">
    <text evidence="1">Seems to bind one calcium ion with high affinity.</text>
</comment>
<comment type="similarity">
    <text evidence="4 7">Belongs to the annexin family.</text>
</comment>
<gene>
    <name type="primary">ANXA4</name>
    <name type="synonym">ANX4</name>
</gene>
<reference key="1">
    <citation type="journal article" date="2002" name="Biochim. Biophys. Acta">
        <title>Cloning and characterization of ZAP36, an annexin-like, zymogen granule membrane associated protein, in exocrine pancreas.</title>
        <authorList>
            <person name="Fukuoka S."/>
            <person name="Horst K."/>
            <person name="Kazuki-Sugino R."/>
            <person name="Ikeda Y."/>
        </authorList>
    </citation>
    <scope>NUCLEOTIDE SEQUENCE [MRNA]</scope>
    <scope>PROTEIN SEQUENCE OF 79-96 AND 135-150</scope>
    <scope>SUBCELLULAR LOCATION</scope>
    <scope>TISSUE SPECIFICITY</scope>
    <source>
        <strain>Mongrel</strain>
        <tissue>Pancreas</tissue>
    </source>
</reference>
<reference key="2">
    <citation type="journal article" date="1994" name="Biosci. Biotechnol. Biochem.">
        <title>Analysis of ZAPs, zymogen granule membrane associated proteins, in the regulated exocytosis of the pancreas.</title>
        <authorList>
            <person name="Fukuoka S."/>
        </authorList>
    </citation>
    <scope>PROTEIN SEQUENCE OF 2-10</scope>
</reference>
<accession>P50994</accession>